<reference key="1">
    <citation type="journal article" date="2008" name="Antimicrob. Agents Chemother.">
        <title>Whole-genome pyrosequencing of an epidemic multidrug-resistant Acinetobacter baumannii strain belonging to the European clone II group.</title>
        <authorList>
            <person name="Iacono M."/>
            <person name="Villa L."/>
            <person name="Fortini D."/>
            <person name="Bordoni R."/>
            <person name="Imperi F."/>
            <person name="Bonnal R.J."/>
            <person name="Sicheritz-Ponten T."/>
            <person name="De Bellis G."/>
            <person name="Visca P."/>
            <person name="Cassone A."/>
            <person name="Carattoli A."/>
        </authorList>
    </citation>
    <scope>NUCLEOTIDE SEQUENCE [LARGE SCALE GENOMIC DNA]</scope>
    <source>
        <strain>ACICU</strain>
    </source>
</reference>
<name>MURD_ACIBC</name>
<comment type="function">
    <text evidence="1">Cell wall formation. Catalyzes the addition of glutamate to the nucleotide precursor UDP-N-acetylmuramoyl-L-alanine (UMA).</text>
</comment>
<comment type="catalytic activity">
    <reaction evidence="1">
        <text>UDP-N-acetyl-alpha-D-muramoyl-L-alanine + D-glutamate + ATP = UDP-N-acetyl-alpha-D-muramoyl-L-alanyl-D-glutamate + ADP + phosphate + H(+)</text>
        <dbReference type="Rhea" id="RHEA:16429"/>
        <dbReference type="ChEBI" id="CHEBI:15378"/>
        <dbReference type="ChEBI" id="CHEBI:29986"/>
        <dbReference type="ChEBI" id="CHEBI:30616"/>
        <dbReference type="ChEBI" id="CHEBI:43474"/>
        <dbReference type="ChEBI" id="CHEBI:83898"/>
        <dbReference type="ChEBI" id="CHEBI:83900"/>
        <dbReference type="ChEBI" id="CHEBI:456216"/>
        <dbReference type="EC" id="6.3.2.9"/>
    </reaction>
</comment>
<comment type="pathway">
    <text evidence="1">Cell wall biogenesis; peptidoglycan biosynthesis.</text>
</comment>
<comment type="subcellular location">
    <subcellularLocation>
        <location evidence="1">Cytoplasm</location>
    </subcellularLocation>
</comment>
<comment type="similarity">
    <text evidence="1">Belongs to the MurCDEF family.</text>
</comment>
<proteinExistence type="inferred from homology"/>
<feature type="chain" id="PRO_1000130821" description="UDP-N-acetylmuramoylalanine--D-glutamate ligase">
    <location>
        <begin position="1"/>
        <end position="448"/>
    </location>
</feature>
<feature type="binding site" evidence="1">
    <location>
        <begin position="112"/>
        <end position="118"/>
    </location>
    <ligand>
        <name>ATP</name>
        <dbReference type="ChEBI" id="CHEBI:30616"/>
    </ligand>
</feature>
<sequence length="448" mass="48009">MLIQRGGLKVVAGLGISGVSAVNFLHEQGYQVAVTDSRPTPPGHDQIPAGVKTSFGQLDQELLLQAEEIILSPGLAPQLPEIQAAIAKGISVVGDIQLLRRATDVPIVAITGSNAKSTVTTLIGLMAKDAGKKVAVGGNLGRPALDLLKDQPELLVLELSSFQLETTSHLNAEVAVVLNMSEDHLDRHGNMLGYHQAKHRIFQGAKKVVFNRDDALSRPLVPDTTPMQSFGLNAPDLNQYGVLRDADGTLWLARGLQRLIKSSDLYIQGMHNVANALACLALGEAIGLPMESMLETLKRFKGLEHRCEYVKTVRDVRYYNDSKGTNVGATLAAIDGLGAAIEVKKGKVALILGGQGKGQDFSPLRSSIEKYAKVVVLIGEDAPVIEQAIQGATKILHAATLKEAVELCQRETQAEDVVLLSPACASFDMFKSYNDRGQQFVACVNSLV</sequence>
<gene>
    <name evidence="1" type="primary">murD</name>
    <name type="ordered locus">ACICU_00268</name>
</gene>
<organism>
    <name type="scientific">Acinetobacter baumannii (strain ACICU)</name>
    <dbReference type="NCBI Taxonomy" id="405416"/>
    <lineage>
        <taxon>Bacteria</taxon>
        <taxon>Pseudomonadati</taxon>
        <taxon>Pseudomonadota</taxon>
        <taxon>Gammaproteobacteria</taxon>
        <taxon>Moraxellales</taxon>
        <taxon>Moraxellaceae</taxon>
        <taxon>Acinetobacter</taxon>
        <taxon>Acinetobacter calcoaceticus/baumannii complex</taxon>
    </lineage>
</organism>
<dbReference type="EC" id="6.3.2.9" evidence="1"/>
<dbReference type="EMBL" id="CP000863">
    <property type="protein sequence ID" value="ACC55580.1"/>
    <property type="molecule type" value="Genomic_DNA"/>
</dbReference>
<dbReference type="RefSeq" id="WP_000908243.1">
    <property type="nucleotide sequence ID" value="NZ_CP031380.1"/>
</dbReference>
<dbReference type="SMR" id="B2I1V6"/>
<dbReference type="KEGG" id="abc:ACICU_00268"/>
<dbReference type="HOGENOM" id="CLU_032540_1_0_6"/>
<dbReference type="UniPathway" id="UPA00219"/>
<dbReference type="Proteomes" id="UP000008839">
    <property type="component" value="Chromosome"/>
</dbReference>
<dbReference type="GO" id="GO:0005737">
    <property type="term" value="C:cytoplasm"/>
    <property type="evidence" value="ECO:0007669"/>
    <property type="project" value="UniProtKB-SubCell"/>
</dbReference>
<dbReference type="GO" id="GO:0005524">
    <property type="term" value="F:ATP binding"/>
    <property type="evidence" value="ECO:0007669"/>
    <property type="project" value="UniProtKB-UniRule"/>
</dbReference>
<dbReference type="GO" id="GO:0008764">
    <property type="term" value="F:UDP-N-acetylmuramoylalanine-D-glutamate ligase activity"/>
    <property type="evidence" value="ECO:0007669"/>
    <property type="project" value="UniProtKB-UniRule"/>
</dbReference>
<dbReference type="GO" id="GO:0051301">
    <property type="term" value="P:cell division"/>
    <property type="evidence" value="ECO:0007669"/>
    <property type="project" value="UniProtKB-KW"/>
</dbReference>
<dbReference type="GO" id="GO:0071555">
    <property type="term" value="P:cell wall organization"/>
    <property type="evidence" value="ECO:0007669"/>
    <property type="project" value="UniProtKB-KW"/>
</dbReference>
<dbReference type="GO" id="GO:0009252">
    <property type="term" value="P:peptidoglycan biosynthetic process"/>
    <property type="evidence" value="ECO:0007669"/>
    <property type="project" value="UniProtKB-UniRule"/>
</dbReference>
<dbReference type="GO" id="GO:0008360">
    <property type="term" value="P:regulation of cell shape"/>
    <property type="evidence" value="ECO:0007669"/>
    <property type="project" value="UniProtKB-KW"/>
</dbReference>
<dbReference type="Gene3D" id="3.90.190.20">
    <property type="entry name" value="Mur ligase, C-terminal domain"/>
    <property type="match status" value="1"/>
</dbReference>
<dbReference type="Gene3D" id="3.40.1190.10">
    <property type="entry name" value="Mur-like, catalytic domain"/>
    <property type="match status" value="1"/>
</dbReference>
<dbReference type="Gene3D" id="3.40.50.720">
    <property type="entry name" value="NAD(P)-binding Rossmann-like Domain"/>
    <property type="match status" value="1"/>
</dbReference>
<dbReference type="HAMAP" id="MF_00639">
    <property type="entry name" value="MurD"/>
    <property type="match status" value="1"/>
</dbReference>
<dbReference type="InterPro" id="IPR036565">
    <property type="entry name" value="Mur-like_cat_sf"/>
</dbReference>
<dbReference type="InterPro" id="IPR004101">
    <property type="entry name" value="Mur_ligase_C"/>
</dbReference>
<dbReference type="InterPro" id="IPR036615">
    <property type="entry name" value="Mur_ligase_C_dom_sf"/>
</dbReference>
<dbReference type="InterPro" id="IPR013221">
    <property type="entry name" value="Mur_ligase_cen"/>
</dbReference>
<dbReference type="InterPro" id="IPR005762">
    <property type="entry name" value="MurD"/>
</dbReference>
<dbReference type="NCBIfam" id="TIGR01087">
    <property type="entry name" value="murD"/>
    <property type="match status" value="1"/>
</dbReference>
<dbReference type="PANTHER" id="PTHR43692">
    <property type="entry name" value="UDP-N-ACETYLMURAMOYLALANINE--D-GLUTAMATE LIGASE"/>
    <property type="match status" value="1"/>
</dbReference>
<dbReference type="PANTHER" id="PTHR43692:SF1">
    <property type="entry name" value="UDP-N-ACETYLMURAMOYLALANINE--D-GLUTAMATE LIGASE"/>
    <property type="match status" value="1"/>
</dbReference>
<dbReference type="Pfam" id="PF02875">
    <property type="entry name" value="Mur_ligase_C"/>
    <property type="match status" value="1"/>
</dbReference>
<dbReference type="Pfam" id="PF08245">
    <property type="entry name" value="Mur_ligase_M"/>
    <property type="match status" value="1"/>
</dbReference>
<dbReference type="Pfam" id="PF21799">
    <property type="entry name" value="MurD-like_N"/>
    <property type="match status" value="1"/>
</dbReference>
<dbReference type="SUPFAM" id="SSF51984">
    <property type="entry name" value="MurCD N-terminal domain"/>
    <property type="match status" value="1"/>
</dbReference>
<dbReference type="SUPFAM" id="SSF53623">
    <property type="entry name" value="MurD-like peptide ligases, catalytic domain"/>
    <property type="match status" value="1"/>
</dbReference>
<dbReference type="SUPFAM" id="SSF53244">
    <property type="entry name" value="MurD-like peptide ligases, peptide-binding domain"/>
    <property type="match status" value="1"/>
</dbReference>
<protein>
    <recommendedName>
        <fullName evidence="1">UDP-N-acetylmuramoylalanine--D-glutamate ligase</fullName>
        <ecNumber evidence="1">6.3.2.9</ecNumber>
    </recommendedName>
    <alternativeName>
        <fullName evidence="1">D-glutamic acid-adding enzyme</fullName>
    </alternativeName>
    <alternativeName>
        <fullName evidence="1">UDP-N-acetylmuramoyl-L-alanyl-D-glutamate synthetase</fullName>
    </alternativeName>
</protein>
<accession>B2I1V6</accession>
<keyword id="KW-0067">ATP-binding</keyword>
<keyword id="KW-0131">Cell cycle</keyword>
<keyword id="KW-0132">Cell division</keyword>
<keyword id="KW-0133">Cell shape</keyword>
<keyword id="KW-0961">Cell wall biogenesis/degradation</keyword>
<keyword id="KW-0963">Cytoplasm</keyword>
<keyword id="KW-0436">Ligase</keyword>
<keyword id="KW-0547">Nucleotide-binding</keyword>
<keyword id="KW-0573">Peptidoglycan synthesis</keyword>
<evidence type="ECO:0000255" key="1">
    <source>
        <dbReference type="HAMAP-Rule" id="MF_00639"/>
    </source>
</evidence>